<feature type="initiator methionine" description="Removed" evidence="1">
    <location>
        <position position="1"/>
    </location>
</feature>
<feature type="chain" id="PRO_0000447432" description="Arginine kinase Scy s 2">
    <location>
        <begin position="2"/>
        <end position="356"/>
    </location>
</feature>
<feature type="domain" description="Phosphagen kinase N-terminal" evidence="2">
    <location>
        <begin position="9"/>
        <end position="91"/>
    </location>
</feature>
<feature type="domain" description="Phosphagen kinase C-terminal" evidence="3">
    <location>
        <begin position="119"/>
        <end position="356"/>
    </location>
</feature>
<feature type="binding site" evidence="1">
    <location>
        <begin position="64"/>
        <end position="68"/>
    </location>
    <ligand>
        <name>L-arginine</name>
        <dbReference type="ChEBI" id="CHEBI:32682"/>
    </ligand>
</feature>
<feature type="binding site" evidence="3">
    <location>
        <begin position="122"/>
        <end position="126"/>
    </location>
    <ligand>
        <name>ATP</name>
        <dbReference type="ChEBI" id="CHEBI:30616"/>
    </ligand>
</feature>
<feature type="binding site" evidence="3">
    <location>
        <position position="185"/>
    </location>
    <ligand>
        <name>ATP</name>
        <dbReference type="ChEBI" id="CHEBI:30616"/>
    </ligand>
</feature>
<feature type="binding site" evidence="1">
    <location>
        <position position="225"/>
    </location>
    <ligand>
        <name>L-arginine</name>
        <dbReference type="ChEBI" id="CHEBI:32682"/>
    </ligand>
</feature>
<feature type="binding site" evidence="3">
    <location>
        <position position="229"/>
    </location>
    <ligand>
        <name>ATP</name>
        <dbReference type="ChEBI" id="CHEBI:30616"/>
    </ligand>
</feature>
<feature type="binding site" evidence="1">
    <location>
        <position position="271"/>
    </location>
    <ligand>
        <name>L-arginine</name>
        <dbReference type="ChEBI" id="CHEBI:32682"/>
    </ligand>
</feature>
<feature type="binding site" evidence="3">
    <location>
        <begin position="280"/>
        <end position="284"/>
    </location>
    <ligand>
        <name>ATP</name>
        <dbReference type="ChEBI" id="CHEBI:30616"/>
    </ligand>
</feature>
<feature type="binding site" evidence="3">
    <location>
        <begin position="309"/>
        <end position="314"/>
    </location>
    <ligand>
        <name>ATP</name>
        <dbReference type="ChEBI" id="CHEBI:30616"/>
    </ligand>
</feature>
<feature type="binding site" evidence="1">
    <location>
        <position position="314"/>
    </location>
    <ligand>
        <name>L-arginine</name>
        <dbReference type="ChEBI" id="CHEBI:32682"/>
    </ligand>
</feature>
<proteinExistence type="evidence at protein level"/>
<name>KARG_SCYSE</name>
<dbReference type="EC" id="2.7.3.3" evidence="5"/>
<dbReference type="EMBL" id="GQ851626">
    <property type="protein sequence ID" value="ACV96855.1"/>
    <property type="molecule type" value="mRNA"/>
</dbReference>
<dbReference type="SMR" id="C9EIP1"/>
<dbReference type="Allergome" id="795">
    <property type="allergen name" value="Scy s 2"/>
</dbReference>
<dbReference type="GO" id="GO:0005615">
    <property type="term" value="C:extracellular space"/>
    <property type="evidence" value="ECO:0007669"/>
    <property type="project" value="TreeGrafter"/>
</dbReference>
<dbReference type="GO" id="GO:0004054">
    <property type="term" value="F:arginine kinase activity"/>
    <property type="evidence" value="ECO:0000314"/>
    <property type="project" value="UniProtKB"/>
</dbReference>
<dbReference type="GO" id="GO:0005524">
    <property type="term" value="F:ATP binding"/>
    <property type="evidence" value="ECO:0007669"/>
    <property type="project" value="UniProtKB-KW"/>
</dbReference>
<dbReference type="GO" id="GO:0004111">
    <property type="term" value="F:creatine kinase activity"/>
    <property type="evidence" value="ECO:0007669"/>
    <property type="project" value="InterPro"/>
</dbReference>
<dbReference type="GO" id="GO:0046314">
    <property type="term" value="P:phosphocreatine biosynthetic process"/>
    <property type="evidence" value="ECO:0007669"/>
    <property type="project" value="InterPro"/>
</dbReference>
<dbReference type="CDD" id="cd07932">
    <property type="entry name" value="arginine_kinase_like"/>
    <property type="match status" value="1"/>
</dbReference>
<dbReference type="FunFam" id="3.30.590.10:FF:000006">
    <property type="entry name" value="Arginine kinase 1"/>
    <property type="match status" value="1"/>
</dbReference>
<dbReference type="FunFam" id="1.10.135.10:FF:000003">
    <property type="entry name" value="Three-domain arginine kinase"/>
    <property type="match status" value="1"/>
</dbReference>
<dbReference type="Gene3D" id="1.10.135.10">
    <property type="entry name" value="ATP:guanido phosphotransferase, N-terminal domain"/>
    <property type="match status" value="1"/>
</dbReference>
<dbReference type="Gene3D" id="3.30.590.10">
    <property type="entry name" value="Glutamine synthetase/guanido kinase, catalytic domain"/>
    <property type="match status" value="1"/>
</dbReference>
<dbReference type="InterPro" id="IPR000749">
    <property type="entry name" value="ATP-guanido_PTrfase"/>
</dbReference>
<dbReference type="InterPro" id="IPR022415">
    <property type="entry name" value="ATP-guanido_PTrfase_AS"/>
</dbReference>
<dbReference type="InterPro" id="IPR022414">
    <property type="entry name" value="ATP-guanido_PTrfase_cat"/>
</dbReference>
<dbReference type="InterPro" id="IPR022413">
    <property type="entry name" value="ATP-guanido_PTrfase_N"/>
</dbReference>
<dbReference type="InterPro" id="IPR036802">
    <property type="entry name" value="ATP-guanido_PTrfase_N_sf"/>
</dbReference>
<dbReference type="InterPro" id="IPR014746">
    <property type="entry name" value="Gln_synth/guanido_kin_cat_dom"/>
</dbReference>
<dbReference type="PANTHER" id="PTHR11547:SF38">
    <property type="entry name" value="ARGININE KINASE 1-RELATED"/>
    <property type="match status" value="1"/>
</dbReference>
<dbReference type="PANTHER" id="PTHR11547">
    <property type="entry name" value="ARGININE OR CREATINE KINASE"/>
    <property type="match status" value="1"/>
</dbReference>
<dbReference type="Pfam" id="PF00217">
    <property type="entry name" value="ATP-gua_Ptrans"/>
    <property type="match status" value="1"/>
</dbReference>
<dbReference type="Pfam" id="PF02807">
    <property type="entry name" value="ATP-gua_PtransN"/>
    <property type="match status" value="1"/>
</dbReference>
<dbReference type="SUPFAM" id="SSF55931">
    <property type="entry name" value="Glutamine synthetase/guanido kinase"/>
    <property type="match status" value="1"/>
</dbReference>
<dbReference type="SUPFAM" id="SSF48034">
    <property type="entry name" value="Guanido kinase N-terminal domain"/>
    <property type="match status" value="1"/>
</dbReference>
<dbReference type="PROSITE" id="PS00112">
    <property type="entry name" value="PHOSPHAGEN_KINASE"/>
    <property type="match status" value="1"/>
</dbReference>
<dbReference type="PROSITE" id="PS51510">
    <property type="entry name" value="PHOSPHAGEN_KINASE_C"/>
    <property type="match status" value="1"/>
</dbReference>
<dbReference type="PROSITE" id="PS51509">
    <property type="entry name" value="PHOSPHAGEN_KINASE_N"/>
    <property type="match status" value="1"/>
</dbReference>
<sequence>MADAAVIEKLEEGFKKLEAATDCKSLLKKYLTKSVFDQLKGKKTSLGATLLDVIQSGVENLDSGVGVYAPDAEAYTLFAPLFDPIIEDYHKGFKQTDKHPNKDFGDVNQFVNVDPDGKFVISTRVRCGRSMEGYPFNPCLTEAQYKEMESKVSSTLSNLEGELKGTYYPLTGMTKDVQQKLIDDHFLFKEGDRFLQAANACRYWPTGRGIYHNDNKTFLVWCNEEDHLRIISMQMGGDLGQVYRRLVSAVNEIEKRVPFSHHDRLGFLTFCPTNLGTTVRASVHIKLPKLAANREKLEEVAGKYSLQVRGTRGEHTEAEGGVYDISNKRRMGLTEFQAVKEMQDGILELIKMEKEM</sequence>
<accession>C9EIP1</accession>
<organism>
    <name type="scientific">Scylla serrata</name>
    <name type="common">Mud crab</name>
    <dbReference type="NCBI Taxonomy" id="6761"/>
    <lineage>
        <taxon>Eukaryota</taxon>
        <taxon>Metazoa</taxon>
        <taxon>Ecdysozoa</taxon>
        <taxon>Arthropoda</taxon>
        <taxon>Crustacea</taxon>
        <taxon>Multicrustacea</taxon>
        <taxon>Malacostraca</taxon>
        <taxon>Eumalacostraca</taxon>
        <taxon>Eucarida</taxon>
        <taxon>Decapoda</taxon>
        <taxon>Pleocyemata</taxon>
        <taxon>Brachyura</taxon>
        <taxon>Eubrachyura</taxon>
        <taxon>Portunoidea</taxon>
        <taxon>Portunidae</taxon>
        <taxon>Portuninae</taxon>
        <taxon>Scylla</taxon>
    </lineage>
</organism>
<comment type="function">
    <text evidence="5">Catalyzes the reversible transfer of high energy ATP gamma-phosphate group to L-arginine.</text>
</comment>
<comment type="catalytic activity">
    <reaction evidence="5">
        <text>L-arginine + ATP = N(omega)-phospho-L-arginine + ADP + H(+)</text>
        <dbReference type="Rhea" id="RHEA:22940"/>
        <dbReference type="ChEBI" id="CHEBI:15378"/>
        <dbReference type="ChEBI" id="CHEBI:30616"/>
        <dbReference type="ChEBI" id="CHEBI:32682"/>
        <dbReference type="ChEBI" id="CHEBI:58477"/>
        <dbReference type="ChEBI" id="CHEBI:456216"/>
        <dbReference type="EC" id="2.7.3.3"/>
    </reaction>
</comment>
<comment type="tissue specificity">
    <text evidence="5">Muscle (at protein level).</text>
</comment>
<comment type="allergen">
    <text evidence="5">Causes an allergic reaction in human. Binds to IgE in all 4 patients tested allergic to crustaceans.</text>
</comment>
<comment type="similarity">
    <text evidence="3 4 7">Belongs to the ATP:guanido phosphotransferase family.</text>
</comment>
<evidence type="ECO:0000250" key="1">
    <source>
        <dbReference type="UniProtKB" id="Q004B5"/>
    </source>
</evidence>
<evidence type="ECO:0000255" key="2">
    <source>
        <dbReference type="PROSITE-ProRule" id="PRU00842"/>
    </source>
</evidence>
<evidence type="ECO:0000255" key="3">
    <source>
        <dbReference type="PROSITE-ProRule" id="PRU00843"/>
    </source>
</evidence>
<evidence type="ECO:0000255" key="4">
    <source>
        <dbReference type="RuleBase" id="RU000505"/>
    </source>
</evidence>
<evidence type="ECO:0000269" key="5">
    <source>
    </source>
</evidence>
<evidence type="ECO:0000303" key="6">
    <source>
    </source>
</evidence>
<evidence type="ECO:0000305" key="7"/>
<evidence type="ECO:0000312" key="8">
    <source>
        <dbReference type="EMBL" id="ACV96855.1"/>
    </source>
</evidence>
<keyword id="KW-0020">Allergen</keyword>
<keyword id="KW-0067">ATP-binding</keyword>
<keyword id="KW-0418">Kinase</keyword>
<keyword id="KW-0547">Nucleotide-binding</keyword>
<keyword id="KW-0808">Transferase</keyword>
<protein>
    <recommendedName>
        <fullName evidence="6">Arginine kinase Scy s 2</fullName>
        <shortName evidence="6">AK</shortName>
        <ecNumber evidence="5">2.7.3.3</ecNumber>
    </recommendedName>
    <allergenName evidence="7">Scy s 2</allergenName>
</protein>
<reference evidence="8" key="1">
    <citation type="journal article" date="2011" name="J. Sci. Food Agric.">
        <title>Purification, cloning, expression and immunological analysis of Scylla serrata arginine kinase, the crab allergen.</title>
        <authorList>
            <person name="Shen Y."/>
            <person name="Cao M.J."/>
            <person name="Cai Q.F."/>
            <person name="Su W.J."/>
            <person name="Yu H.L."/>
            <person name="Ruan W.W."/>
            <person name="Liu G.M."/>
        </authorList>
    </citation>
    <scope>NUCLEOTIDE SEQUENCE [MRNA]</scope>
    <scope>IDENTIFICATION BY MASS SPECTROMETRY</scope>
    <scope>FUNCTION</scope>
    <scope>CATALYTIC ACTIVITY</scope>
    <scope>TISSUE SPECIFICITY</scope>
    <scope>ALLERGEN</scope>
    <source>
        <tissue evidence="6">Muscle</tissue>
    </source>
</reference>